<comment type="function">
    <text evidence="1">Catalyzes the synthesis of the hydroxymethylpyrimidine phosphate (HMP-P) moiety of thiamine from aminoimidazole ribotide (AIR) in a radical S-adenosyl-L-methionine (SAM)-dependent reaction.</text>
</comment>
<comment type="catalytic activity">
    <reaction evidence="1">
        <text>5-amino-1-(5-phospho-beta-D-ribosyl)imidazole + S-adenosyl-L-methionine = 4-amino-2-methyl-5-(phosphooxymethyl)pyrimidine + CO + 5'-deoxyadenosine + formate + L-methionine + 3 H(+)</text>
        <dbReference type="Rhea" id="RHEA:24840"/>
        <dbReference type="ChEBI" id="CHEBI:15378"/>
        <dbReference type="ChEBI" id="CHEBI:15740"/>
        <dbReference type="ChEBI" id="CHEBI:17245"/>
        <dbReference type="ChEBI" id="CHEBI:17319"/>
        <dbReference type="ChEBI" id="CHEBI:57844"/>
        <dbReference type="ChEBI" id="CHEBI:58354"/>
        <dbReference type="ChEBI" id="CHEBI:59789"/>
        <dbReference type="ChEBI" id="CHEBI:137981"/>
        <dbReference type="EC" id="4.1.99.17"/>
    </reaction>
</comment>
<comment type="cofactor">
    <cofactor evidence="1">
        <name>[4Fe-4S] cluster</name>
        <dbReference type="ChEBI" id="CHEBI:49883"/>
    </cofactor>
    <text evidence="1">Binds 1 [4Fe-4S] cluster per subunit. The cluster is coordinated with 3 cysteines and an exchangeable S-adenosyl-L-methionine.</text>
</comment>
<comment type="pathway">
    <text evidence="1">Cofactor biosynthesis; thiamine diphosphate biosynthesis.</text>
</comment>
<comment type="subunit">
    <text evidence="1">Homodimer.</text>
</comment>
<comment type="similarity">
    <text evidence="1">Belongs to the ThiC family.</text>
</comment>
<dbReference type="EC" id="4.1.99.17" evidence="1"/>
<dbReference type="EMBL" id="CP000304">
    <property type="protein sequence ID" value="ABP81439.1"/>
    <property type="molecule type" value="Genomic_DNA"/>
</dbReference>
<dbReference type="RefSeq" id="WP_011914824.1">
    <property type="nucleotide sequence ID" value="NC_009434.1"/>
</dbReference>
<dbReference type="SMR" id="A4VR38"/>
<dbReference type="KEGG" id="psa:PST_3816"/>
<dbReference type="eggNOG" id="COG0422">
    <property type="taxonomic scope" value="Bacteria"/>
</dbReference>
<dbReference type="HOGENOM" id="CLU_013181_2_1_6"/>
<dbReference type="UniPathway" id="UPA00060"/>
<dbReference type="Proteomes" id="UP000000233">
    <property type="component" value="Chromosome"/>
</dbReference>
<dbReference type="GO" id="GO:0005829">
    <property type="term" value="C:cytosol"/>
    <property type="evidence" value="ECO:0007669"/>
    <property type="project" value="TreeGrafter"/>
</dbReference>
<dbReference type="GO" id="GO:0051539">
    <property type="term" value="F:4 iron, 4 sulfur cluster binding"/>
    <property type="evidence" value="ECO:0007669"/>
    <property type="project" value="UniProtKB-KW"/>
</dbReference>
<dbReference type="GO" id="GO:0016830">
    <property type="term" value="F:carbon-carbon lyase activity"/>
    <property type="evidence" value="ECO:0007669"/>
    <property type="project" value="InterPro"/>
</dbReference>
<dbReference type="GO" id="GO:0008270">
    <property type="term" value="F:zinc ion binding"/>
    <property type="evidence" value="ECO:0007669"/>
    <property type="project" value="UniProtKB-UniRule"/>
</dbReference>
<dbReference type="GO" id="GO:0009228">
    <property type="term" value="P:thiamine biosynthetic process"/>
    <property type="evidence" value="ECO:0007669"/>
    <property type="project" value="UniProtKB-KW"/>
</dbReference>
<dbReference type="GO" id="GO:0009229">
    <property type="term" value="P:thiamine diphosphate biosynthetic process"/>
    <property type="evidence" value="ECO:0007669"/>
    <property type="project" value="UniProtKB-UniRule"/>
</dbReference>
<dbReference type="FunFam" id="3.20.20.540:FF:000001">
    <property type="entry name" value="Phosphomethylpyrimidine synthase"/>
    <property type="match status" value="1"/>
</dbReference>
<dbReference type="Gene3D" id="6.10.250.620">
    <property type="match status" value="1"/>
</dbReference>
<dbReference type="Gene3D" id="3.20.20.540">
    <property type="entry name" value="Radical SAM ThiC family, central domain"/>
    <property type="match status" value="1"/>
</dbReference>
<dbReference type="HAMAP" id="MF_00089">
    <property type="entry name" value="ThiC"/>
    <property type="match status" value="1"/>
</dbReference>
<dbReference type="InterPro" id="IPR037509">
    <property type="entry name" value="ThiC"/>
</dbReference>
<dbReference type="InterPro" id="IPR025747">
    <property type="entry name" value="ThiC-associated_dom"/>
</dbReference>
<dbReference type="InterPro" id="IPR038521">
    <property type="entry name" value="ThiC/Bza_core_dom"/>
</dbReference>
<dbReference type="InterPro" id="IPR002817">
    <property type="entry name" value="ThiC/BzaA/B"/>
</dbReference>
<dbReference type="NCBIfam" id="NF006763">
    <property type="entry name" value="PRK09284.1"/>
    <property type="match status" value="1"/>
</dbReference>
<dbReference type="NCBIfam" id="NF009895">
    <property type="entry name" value="PRK13352.1"/>
    <property type="match status" value="1"/>
</dbReference>
<dbReference type="NCBIfam" id="TIGR00190">
    <property type="entry name" value="thiC"/>
    <property type="match status" value="1"/>
</dbReference>
<dbReference type="PANTHER" id="PTHR30557:SF1">
    <property type="entry name" value="PHOSPHOMETHYLPYRIMIDINE SYNTHASE, CHLOROPLASTIC"/>
    <property type="match status" value="1"/>
</dbReference>
<dbReference type="PANTHER" id="PTHR30557">
    <property type="entry name" value="THIAMINE BIOSYNTHESIS PROTEIN THIC"/>
    <property type="match status" value="1"/>
</dbReference>
<dbReference type="Pfam" id="PF13667">
    <property type="entry name" value="ThiC-associated"/>
    <property type="match status" value="1"/>
</dbReference>
<dbReference type="Pfam" id="PF01964">
    <property type="entry name" value="ThiC_Rad_SAM"/>
    <property type="match status" value="1"/>
</dbReference>
<dbReference type="SFLD" id="SFLDF00407">
    <property type="entry name" value="phosphomethylpyrimidine_syntha"/>
    <property type="match status" value="1"/>
</dbReference>
<dbReference type="SFLD" id="SFLDG01114">
    <property type="entry name" value="phosphomethylpyrimidine_syntha"/>
    <property type="match status" value="1"/>
</dbReference>
<dbReference type="SFLD" id="SFLDS00113">
    <property type="entry name" value="Radical_SAM_Phosphomethylpyrim"/>
    <property type="match status" value="1"/>
</dbReference>
<feature type="chain" id="PRO_1000057596" description="Phosphomethylpyrimidine synthase">
    <location>
        <begin position="1"/>
        <end position="627"/>
    </location>
</feature>
<feature type="region of interest" description="Disordered" evidence="2">
    <location>
        <begin position="1"/>
        <end position="21"/>
    </location>
</feature>
<feature type="binding site" evidence="1">
    <location>
        <position position="231"/>
    </location>
    <ligand>
        <name>substrate</name>
    </ligand>
</feature>
<feature type="binding site" evidence="1">
    <location>
        <position position="260"/>
    </location>
    <ligand>
        <name>substrate</name>
    </ligand>
</feature>
<feature type="binding site" evidence="1">
    <location>
        <position position="289"/>
    </location>
    <ligand>
        <name>substrate</name>
    </ligand>
</feature>
<feature type="binding site" evidence="1">
    <location>
        <position position="325"/>
    </location>
    <ligand>
        <name>substrate</name>
    </ligand>
</feature>
<feature type="binding site" evidence="1">
    <location>
        <begin position="345"/>
        <end position="347"/>
    </location>
    <ligand>
        <name>substrate</name>
    </ligand>
</feature>
<feature type="binding site" evidence="1">
    <location>
        <begin position="386"/>
        <end position="389"/>
    </location>
    <ligand>
        <name>substrate</name>
    </ligand>
</feature>
<feature type="binding site" evidence="1">
    <location>
        <position position="425"/>
    </location>
    <ligand>
        <name>substrate</name>
    </ligand>
</feature>
<feature type="binding site" evidence="1">
    <location>
        <position position="429"/>
    </location>
    <ligand>
        <name>Zn(2+)</name>
        <dbReference type="ChEBI" id="CHEBI:29105"/>
    </ligand>
</feature>
<feature type="binding site" evidence="1">
    <location>
        <position position="452"/>
    </location>
    <ligand>
        <name>substrate</name>
    </ligand>
</feature>
<feature type="binding site" evidence="1">
    <location>
        <position position="493"/>
    </location>
    <ligand>
        <name>Zn(2+)</name>
        <dbReference type="ChEBI" id="CHEBI:29105"/>
    </ligand>
</feature>
<feature type="binding site" evidence="1">
    <location>
        <position position="573"/>
    </location>
    <ligand>
        <name>[4Fe-4S] cluster</name>
        <dbReference type="ChEBI" id="CHEBI:49883"/>
        <note>4Fe-4S-S-AdoMet</note>
    </ligand>
</feature>
<feature type="binding site" evidence="1">
    <location>
        <position position="576"/>
    </location>
    <ligand>
        <name>[4Fe-4S] cluster</name>
        <dbReference type="ChEBI" id="CHEBI:49883"/>
        <note>4Fe-4S-S-AdoMet</note>
    </ligand>
</feature>
<feature type="binding site" evidence="1">
    <location>
        <position position="581"/>
    </location>
    <ligand>
        <name>[4Fe-4S] cluster</name>
        <dbReference type="ChEBI" id="CHEBI:49883"/>
        <note>4Fe-4S-S-AdoMet</note>
    </ligand>
</feature>
<protein>
    <recommendedName>
        <fullName evidence="1">Phosphomethylpyrimidine synthase</fullName>
        <ecNumber evidence="1">4.1.99.17</ecNumber>
    </recommendedName>
    <alternativeName>
        <fullName evidence="1">Hydroxymethylpyrimidine phosphate synthase</fullName>
        <shortName evidence="1">HMP-P synthase</shortName>
        <shortName evidence="1">HMP-phosphate synthase</shortName>
        <shortName evidence="1">HMPP synthase</shortName>
    </alternativeName>
    <alternativeName>
        <fullName evidence="1">Thiamine biosynthesis protein ThiC</fullName>
    </alternativeName>
</protein>
<reference key="1">
    <citation type="journal article" date="2008" name="Proc. Natl. Acad. Sci. U.S.A.">
        <title>Nitrogen fixation island and rhizosphere competence traits in the genome of root-associated Pseudomonas stutzeri A1501.</title>
        <authorList>
            <person name="Yan Y."/>
            <person name="Yang J."/>
            <person name="Dou Y."/>
            <person name="Chen M."/>
            <person name="Ping S."/>
            <person name="Peng J."/>
            <person name="Lu W."/>
            <person name="Zhang W."/>
            <person name="Yao Z."/>
            <person name="Li H."/>
            <person name="Liu W."/>
            <person name="He S."/>
            <person name="Geng L."/>
            <person name="Zhang X."/>
            <person name="Yang F."/>
            <person name="Yu H."/>
            <person name="Zhan Y."/>
            <person name="Li D."/>
            <person name="Lin Z."/>
            <person name="Wang Y."/>
            <person name="Elmerich C."/>
            <person name="Lin M."/>
            <person name="Jin Q."/>
        </authorList>
    </citation>
    <scope>NUCLEOTIDE SEQUENCE [LARGE SCALE GENOMIC DNA]</scope>
    <source>
        <strain>A1501</strain>
    </source>
</reference>
<proteinExistence type="inferred from homology"/>
<sequence>MSVQSNKNLSESAQVDQQSIQPFPRSQKIYVQGSRPDIRVPMREISLDVTPTDFGGEINAPVTVYDTSGPYTDPNVTIDVRKGLADVRSAWIEDRGDTEKLPGLTSEFGQRRLNDAELSAMRFAHVRNPRRAKAEHNVSQMHYAKKGIITPEMEYVAIRENMKLAEAREAGLLVEQHAGQSFGAAIPKEITPEFVRSEVARGRAIIPANINHTELEPMIIGRNFLVKINGNIGNSALGSSIEEEVAKLTWGIRWGSDTVMDLSTGKHIHETREWIIRNSPVPIGTVPIYQALEKVNGVAEDLTWELFRDTLIEQAEQGVDYFTIHAGVLLRYVPLTAKRVTGIVSRGGSIMAKWCLAHHKENFLYTHFEEICEIMKAYDVSFSLGDGLRPGSIADANDAAQFGELETLGELTKIAWKHDVQCMIEGPGHVPMHMIKENMDKQLECCDEAPFYTLGPLTTDIAPGYDHITSGIGAAMIGWFGCAMLCYVTPKEHLGLPNKDDVKTGIITYKIAAHAADLAKGHPGAQIRDNALSKARFEFRWEDQFNLGLDPDTARAFHDETLPKESAKVAHFCSMCGPKFCSMKITQEVREYAAEHGLTDEQKAIEAGFAEQSSRFKDGGSVIYKQV</sequence>
<accession>A4VR38</accession>
<name>THIC_STUS1</name>
<keyword id="KW-0004">4Fe-4S</keyword>
<keyword id="KW-0408">Iron</keyword>
<keyword id="KW-0411">Iron-sulfur</keyword>
<keyword id="KW-0456">Lyase</keyword>
<keyword id="KW-0479">Metal-binding</keyword>
<keyword id="KW-1185">Reference proteome</keyword>
<keyword id="KW-0949">S-adenosyl-L-methionine</keyword>
<keyword id="KW-0784">Thiamine biosynthesis</keyword>
<keyword id="KW-0862">Zinc</keyword>
<evidence type="ECO:0000255" key="1">
    <source>
        <dbReference type="HAMAP-Rule" id="MF_00089"/>
    </source>
</evidence>
<evidence type="ECO:0000256" key="2">
    <source>
        <dbReference type="SAM" id="MobiDB-lite"/>
    </source>
</evidence>
<organism>
    <name type="scientific">Stutzerimonas stutzeri (strain A1501)</name>
    <name type="common">Pseudomonas stutzeri</name>
    <dbReference type="NCBI Taxonomy" id="379731"/>
    <lineage>
        <taxon>Bacteria</taxon>
        <taxon>Pseudomonadati</taxon>
        <taxon>Pseudomonadota</taxon>
        <taxon>Gammaproteobacteria</taxon>
        <taxon>Pseudomonadales</taxon>
        <taxon>Pseudomonadaceae</taxon>
        <taxon>Stutzerimonas</taxon>
    </lineage>
</organism>
<gene>
    <name evidence="1" type="primary">thiC</name>
    <name type="ordered locus">PST_3816</name>
</gene>